<sequence>MKLPQPLFQGTLIRRYQRFLADVELDDGTVVTAHTPNTGSMMGCACPGNRVLLSKSASLTRKYPHSWELVQADGTWVGINTQLPNLLAREAILDGTISELSGYQQIRGEVPYGSGSRIDLLLSGEQGLCYVETKNVTLVEDGVALFPDAVSARGQKHLRELMEMVRQGHRAVNLFIVQRADGAALAPADAIDPVYGRLLREAAQNGVEILAYRAEVTRTEVRLERALPVLL</sequence>
<reference key="1">
    <citation type="submission" date="2008-07" db="EMBL/GenBank/DDBJ databases">
        <title>Complete sequence of Geobacter bemidjiensis BEM.</title>
        <authorList>
            <consortium name="US DOE Joint Genome Institute"/>
            <person name="Lucas S."/>
            <person name="Copeland A."/>
            <person name="Lapidus A."/>
            <person name="Glavina del Rio T."/>
            <person name="Dalin E."/>
            <person name="Tice H."/>
            <person name="Bruce D."/>
            <person name="Goodwin L."/>
            <person name="Pitluck S."/>
            <person name="Kiss H."/>
            <person name="Brettin T."/>
            <person name="Detter J.C."/>
            <person name="Han C."/>
            <person name="Kuske C.R."/>
            <person name="Schmutz J."/>
            <person name="Larimer F."/>
            <person name="Land M."/>
            <person name="Hauser L."/>
            <person name="Kyrpides N."/>
            <person name="Lykidis A."/>
            <person name="Lovley D."/>
            <person name="Richardson P."/>
        </authorList>
    </citation>
    <scope>NUCLEOTIDE SEQUENCE [LARGE SCALE GENOMIC DNA]</scope>
    <source>
        <strain>ATCC BAA-1014 / DSM 16622 / JCM 12645 / Bem</strain>
    </source>
</reference>
<feature type="chain" id="PRO_1000093573" description="Sugar fermentation stimulation protein homolog">
    <location>
        <begin position="1"/>
        <end position="231"/>
    </location>
</feature>
<comment type="similarity">
    <text evidence="1">Belongs to the SfsA family.</text>
</comment>
<keyword id="KW-1185">Reference proteome</keyword>
<evidence type="ECO:0000255" key="1">
    <source>
        <dbReference type="HAMAP-Rule" id="MF_00095"/>
    </source>
</evidence>
<gene>
    <name evidence="1" type="primary">sfsA</name>
    <name type="ordered locus">Gbem_2466</name>
</gene>
<dbReference type="EMBL" id="CP001124">
    <property type="protein sequence ID" value="ACH39474.1"/>
    <property type="molecule type" value="Genomic_DNA"/>
</dbReference>
<dbReference type="RefSeq" id="WP_012530897.1">
    <property type="nucleotide sequence ID" value="NC_011146.1"/>
</dbReference>
<dbReference type="SMR" id="B5EG09"/>
<dbReference type="STRING" id="404380.Gbem_2466"/>
<dbReference type="KEGG" id="gbm:Gbem_2466"/>
<dbReference type="eggNOG" id="COG1489">
    <property type="taxonomic scope" value="Bacteria"/>
</dbReference>
<dbReference type="HOGENOM" id="CLU_052299_2_0_7"/>
<dbReference type="OrthoDB" id="9802365at2"/>
<dbReference type="Proteomes" id="UP000008825">
    <property type="component" value="Chromosome"/>
</dbReference>
<dbReference type="GO" id="GO:0003677">
    <property type="term" value="F:DNA binding"/>
    <property type="evidence" value="ECO:0007669"/>
    <property type="project" value="InterPro"/>
</dbReference>
<dbReference type="CDD" id="cd22359">
    <property type="entry name" value="SfsA-like_bacterial"/>
    <property type="match status" value="1"/>
</dbReference>
<dbReference type="FunFam" id="3.40.1350.60:FF:000001">
    <property type="entry name" value="Sugar fermentation stimulation protein A"/>
    <property type="match status" value="1"/>
</dbReference>
<dbReference type="Gene3D" id="2.40.50.580">
    <property type="match status" value="1"/>
</dbReference>
<dbReference type="Gene3D" id="3.40.1350.60">
    <property type="match status" value="1"/>
</dbReference>
<dbReference type="HAMAP" id="MF_00095">
    <property type="entry name" value="SfsA"/>
    <property type="match status" value="1"/>
</dbReference>
<dbReference type="InterPro" id="IPR005224">
    <property type="entry name" value="SfsA"/>
</dbReference>
<dbReference type="InterPro" id="IPR040452">
    <property type="entry name" value="SfsA_C"/>
</dbReference>
<dbReference type="InterPro" id="IPR041465">
    <property type="entry name" value="SfsA_N"/>
</dbReference>
<dbReference type="NCBIfam" id="TIGR00230">
    <property type="entry name" value="sfsA"/>
    <property type="match status" value="1"/>
</dbReference>
<dbReference type="PANTHER" id="PTHR30545">
    <property type="entry name" value="SUGAR FERMENTATION STIMULATION PROTEIN A"/>
    <property type="match status" value="1"/>
</dbReference>
<dbReference type="PANTHER" id="PTHR30545:SF2">
    <property type="entry name" value="SUGAR FERMENTATION STIMULATION PROTEIN A"/>
    <property type="match status" value="1"/>
</dbReference>
<dbReference type="Pfam" id="PF03749">
    <property type="entry name" value="SfsA"/>
    <property type="match status" value="1"/>
</dbReference>
<dbReference type="Pfam" id="PF17746">
    <property type="entry name" value="SfsA_N"/>
    <property type="match status" value="1"/>
</dbReference>
<organism>
    <name type="scientific">Citrifermentans bemidjiense (strain ATCC BAA-1014 / DSM 16622 / JCM 12645 / Bem)</name>
    <name type="common">Geobacter bemidjiensis</name>
    <dbReference type="NCBI Taxonomy" id="404380"/>
    <lineage>
        <taxon>Bacteria</taxon>
        <taxon>Pseudomonadati</taxon>
        <taxon>Thermodesulfobacteriota</taxon>
        <taxon>Desulfuromonadia</taxon>
        <taxon>Geobacterales</taxon>
        <taxon>Geobacteraceae</taxon>
        <taxon>Citrifermentans</taxon>
    </lineage>
</organism>
<name>SFSA_CITBB</name>
<proteinExistence type="inferred from homology"/>
<protein>
    <recommendedName>
        <fullName evidence="1">Sugar fermentation stimulation protein homolog</fullName>
    </recommendedName>
</protein>
<accession>B5EG09</accession>